<comment type="function">
    <text evidence="1 2">Single-stranded-DNA-specific exonuclease. Required for many types of recombinational events, although the stringency of the requirement for RecJ appears to vary with the type of recombinational event monitored and the other recombination gene products which are available (By similarity). Involved in genome maintenance but probably not in phase variation, which contributes to the virulence and disease (PubMed:18242643).</text>
</comment>
<comment type="disruption phenotype">
    <text evidence="2">Slightly decreased growth rate, higher sensitivity to UV light, slight increase in sensitivity to mitomycin C treatment, no change in the spontaneous mutation rate, no change in the rates of slippage in tetranucleotide repeat tracts (i.e. phase variation) (PubMed:18242643). A double exoI-recJ deletion strain has a 2.5-fold increase in spontaneous mutations (PubMed:18242643).</text>
</comment>
<comment type="similarity">
    <text evidence="3">Belongs to the RecJ family.</text>
</comment>
<gene>
    <name type="primary">recJ</name>
    <name type="ordered locus">HI_1214</name>
</gene>
<sequence>MKKLIKRREIPIGNSVSNHPLLDRLYRARHIQNTKELDRTLKSMLNPNQLYGIEQAVNLLVEAYQPQQKIVIVGDFDADGATSTALSVLALRQLGFSDVDYLVPNRFEQGYGLSIPVAEMAIEKGVQLLMTVDNGVSSFDGVAFLKEKGIRVLVTDHHLPPETLPPADAIVNPNLSQCGFPSKSLAGVGVAFYLMLAVRAKFRELGIFTAETQPNFTDLLDLVALGTIADVVPLDQNNRILAYQGLMRIRARHCRLGIIALAEVANRNVEQFTSSDLGFCIGPRLNAAGRLDNMSIGVELLLANEMSKARELALDLDQLNQTRKEIEAGMKLEAIKICQNLTALFKELPYGITLYQPDWHQGVLGIVSSRIKDQYHRPVIAFAQDSEGILKGSARSIEGLHMRDVLERIHSQHPNMILKFGGHAMAAGLSIREEHFADFQHIFNQTVADWLDEEHLQGVIWTDGELNSNEFNLETAELIKSVGTWGQGFPEPCFDGEFKILDQRAIGQNKNHLKMLLEPKQGGVLLDAIAFNINTRLYPDLSIKQARLAYKLEINEFRGNRSLQLLVDYIEPIDE</sequence>
<name>RECJ_HAEIN</name>
<keyword id="KW-0269">Exonuclease</keyword>
<keyword id="KW-0378">Hydrolase</keyword>
<keyword id="KW-0540">Nuclease</keyword>
<keyword id="KW-1185">Reference proteome</keyword>
<dbReference type="EC" id="3.1.-.-"/>
<dbReference type="EMBL" id="L42023">
    <property type="protein sequence ID" value="AAC22867.1"/>
    <property type="molecule type" value="Genomic_DNA"/>
</dbReference>
<dbReference type="PIR" id="F64110">
    <property type="entry name" value="F64110"/>
</dbReference>
<dbReference type="RefSeq" id="NP_439370.1">
    <property type="nucleotide sequence ID" value="NC_000907.1"/>
</dbReference>
<dbReference type="SMR" id="P45112"/>
<dbReference type="STRING" id="71421.HI_1214"/>
<dbReference type="EnsemblBacteria" id="AAC22867">
    <property type="protein sequence ID" value="AAC22867"/>
    <property type="gene ID" value="HI_1214"/>
</dbReference>
<dbReference type="KEGG" id="hin:HI_1214"/>
<dbReference type="PATRIC" id="fig|71421.8.peg.1266"/>
<dbReference type="eggNOG" id="COG0608">
    <property type="taxonomic scope" value="Bacteria"/>
</dbReference>
<dbReference type="HOGENOM" id="CLU_009736_5_1_6"/>
<dbReference type="OrthoDB" id="9809852at2"/>
<dbReference type="PhylomeDB" id="P45112"/>
<dbReference type="BioCyc" id="HINF71421:G1GJ1-1245-MONOMER"/>
<dbReference type="Proteomes" id="UP000000579">
    <property type="component" value="Chromosome"/>
</dbReference>
<dbReference type="GO" id="GO:0003676">
    <property type="term" value="F:nucleic acid binding"/>
    <property type="evidence" value="ECO:0007669"/>
    <property type="project" value="InterPro"/>
</dbReference>
<dbReference type="GO" id="GO:0045145">
    <property type="term" value="F:single-stranded DNA 5'-3' DNA exonuclease activity"/>
    <property type="evidence" value="ECO:0000318"/>
    <property type="project" value="GO_Central"/>
</dbReference>
<dbReference type="GO" id="GO:0006310">
    <property type="term" value="P:DNA recombination"/>
    <property type="evidence" value="ECO:0000318"/>
    <property type="project" value="GO_Central"/>
</dbReference>
<dbReference type="GO" id="GO:0006281">
    <property type="term" value="P:DNA repair"/>
    <property type="evidence" value="ECO:0007669"/>
    <property type="project" value="InterPro"/>
</dbReference>
<dbReference type="FunFam" id="3.90.1640.30:FF:000001">
    <property type="entry name" value="Single-stranded-DNA-specific exonuclease RecJ"/>
    <property type="match status" value="1"/>
</dbReference>
<dbReference type="Gene3D" id="3.10.310.30">
    <property type="match status" value="1"/>
</dbReference>
<dbReference type="Gene3D" id="3.90.1640.30">
    <property type="match status" value="1"/>
</dbReference>
<dbReference type="InterPro" id="IPR001667">
    <property type="entry name" value="DDH_dom"/>
</dbReference>
<dbReference type="InterPro" id="IPR038763">
    <property type="entry name" value="DHH_sf"/>
</dbReference>
<dbReference type="InterPro" id="IPR003156">
    <property type="entry name" value="DHHA1_dom"/>
</dbReference>
<dbReference type="InterPro" id="IPR004610">
    <property type="entry name" value="RecJ"/>
</dbReference>
<dbReference type="InterPro" id="IPR041122">
    <property type="entry name" value="RecJ_OB"/>
</dbReference>
<dbReference type="InterPro" id="IPR051673">
    <property type="entry name" value="SSDNA_exonuclease_RecJ"/>
</dbReference>
<dbReference type="NCBIfam" id="TIGR00644">
    <property type="entry name" value="recJ"/>
    <property type="match status" value="1"/>
</dbReference>
<dbReference type="PANTHER" id="PTHR30255">
    <property type="entry name" value="SINGLE-STRANDED-DNA-SPECIFIC EXONUCLEASE RECJ"/>
    <property type="match status" value="1"/>
</dbReference>
<dbReference type="PANTHER" id="PTHR30255:SF2">
    <property type="entry name" value="SINGLE-STRANDED-DNA-SPECIFIC EXONUCLEASE RECJ"/>
    <property type="match status" value="1"/>
</dbReference>
<dbReference type="Pfam" id="PF01368">
    <property type="entry name" value="DHH"/>
    <property type="match status" value="1"/>
</dbReference>
<dbReference type="Pfam" id="PF02272">
    <property type="entry name" value="DHHA1"/>
    <property type="match status" value="1"/>
</dbReference>
<dbReference type="Pfam" id="PF17768">
    <property type="entry name" value="RecJ_OB"/>
    <property type="match status" value="1"/>
</dbReference>
<dbReference type="SUPFAM" id="SSF64182">
    <property type="entry name" value="DHH phosphoesterases"/>
    <property type="match status" value="1"/>
</dbReference>
<evidence type="ECO:0000250" key="1">
    <source>
        <dbReference type="UniProtKB" id="P21893"/>
    </source>
</evidence>
<evidence type="ECO:0000269" key="2">
    <source>
    </source>
</evidence>
<evidence type="ECO:0000305" key="3"/>
<protein>
    <recommendedName>
        <fullName>Single-stranded-DNA-specific exonuclease RecJ</fullName>
        <ecNumber>3.1.-.-</ecNumber>
    </recommendedName>
</protein>
<feature type="chain" id="PRO_0000097230" description="Single-stranded-DNA-specific exonuclease RecJ">
    <location>
        <begin position="1"/>
        <end position="575"/>
    </location>
</feature>
<accession>P45112</accession>
<reference key="1">
    <citation type="journal article" date="1995" name="Science">
        <title>Whole-genome random sequencing and assembly of Haemophilus influenzae Rd.</title>
        <authorList>
            <person name="Fleischmann R.D."/>
            <person name="Adams M.D."/>
            <person name="White O."/>
            <person name="Clayton R.A."/>
            <person name="Kirkness E.F."/>
            <person name="Kerlavage A.R."/>
            <person name="Bult C.J."/>
            <person name="Tomb J.-F."/>
            <person name="Dougherty B.A."/>
            <person name="Merrick J.M."/>
            <person name="McKenney K."/>
            <person name="Sutton G.G."/>
            <person name="FitzHugh W."/>
            <person name="Fields C.A."/>
            <person name="Gocayne J.D."/>
            <person name="Scott J.D."/>
            <person name="Shirley R."/>
            <person name="Liu L.-I."/>
            <person name="Glodek A."/>
            <person name="Kelley J.M."/>
            <person name="Weidman J.F."/>
            <person name="Phillips C.A."/>
            <person name="Spriggs T."/>
            <person name="Hedblom E."/>
            <person name="Cotton M.D."/>
            <person name="Utterback T.R."/>
            <person name="Hanna M.C."/>
            <person name="Nguyen D.T."/>
            <person name="Saudek D.M."/>
            <person name="Brandon R.C."/>
            <person name="Fine L.D."/>
            <person name="Fritchman J.L."/>
            <person name="Fuhrmann J.L."/>
            <person name="Geoghagen N.S.M."/>
            <person name="Gnehm C.L."/>
            <person name="McDonald L.A."/>
            <person name="Small K.V."/>
            <person name="Fraser C.M."/>
            <person name="Smith H.O."/>
            <person name="Venter J.C."/>
        </authorList>
    </citation>
    <scope>NUCLEOTIDE SEQUENCE [LARGE SCALE GENOMIC DNA]</scope>
    <source>
        <strain>ATCC 51907 / DSM 11121 / KW20 / Rd</strain>
    </source>
</reference>
<reference key="2">
    <citation type="journal article" date="2008" name="Mutat. Res.">
        <title>RecJ, ExoI and RecG are required for genome maintenance but not for generation of genetic diversity by repeat-mediated phase variation in Haemophilus influenzae.</title>
        <authorList>
            <person name="Kumar G.A."/>
            <person name="Woodhall M.R."/>
            <person name="Hood D.W."/>
            <person name="Moxon E.R."/>
            <person name="Bayliss C.D."/>
        </authorList>
    </citation>
    <scope>FUNCTION</scope>
    <scope>DISRUPTION PHENOTYPE</scope>
    <source>
        <strain>ATCC 51907 / DSM 11121 / KW20 / Rd</strain>
    </source>
</reference>
<organism>
    <name type="scientific">Haemophilus influenzae (strain ATCC 51907 / DSM 11121 / KW20 / Rd)</name>
    <dbReference type="NCBI Taxonomy" id="71421"/>
    <lineage>
        <taxon>Bacteria</taxon>
        <taxon>Pseudomonadati</taxon>
        <taxon>Pseudomonadota</taxon>
        <taxon>Gammaproteobacteria</taxon>
        <taxon>Pasteurellales</taxon>
        <taxon>Pasteurellaceae</taxon>
        <taxon>Haemophilus</taxon>
    </lineage>
</organism>
<proteinExistence type="inferred from homology"/>